<gene>
    <name type="primary">nicS</name>
    <name type="ordered locus">PP_3949</name>
</gene>
<keyword id="KW-0058">Aromatic hydrocarbons catabolism</keyword>
<keyword id="KW-0238">DNA-binding</keyword>
<keyword id="KW-1185">Reference proteome</keyword>
<keyword id="KW-0678">Repressor</keyword>
<keyword id="KW-0804">Transcription</keyword>
<keyword id="KW-0805">Transcription regulation</keyword>
<proteinExistence type="evidence at transcript level"/>
<organism>
    <name type="scientific">Pseudomonas putida (strain ATCC 47054 / DSM 6125 / CFBP 8728 / NCIMB 11950 / KT2440)</name>
    <dbReference type="NCBI Taxonomy" id="160488"/>
    <lineage>
        <taxon>Bacteria</taxon>
        <taxon>Pseudomonadati</taxon>
        <taxon>Pseudomonadota</taxon>
        <taxon>Gammaproteobacteria</taxon>
        <taxon>Pseudomonadales</taxon>
        <taxon>Pseudomonadaceae</taxon>
        <taxon>Pseudomonas</taxon>
    </lineage>
</organism>
<feature type="chain" id="PRO_0000418484" description="HTH-type transcriptional repressor NicS">
    <location>
        <begin position="1"/>
        <end position="212"/>
    </location>
</feature>
<feature type="domain" description="HTH tetR-type" evidence="1">
    <location>
        <begin position="14"/>
        <end position="74"/>
    </location>
</feature>
<feature type="DNA-binding region" description="H-T-H motif" evidence="1">
    <location>
        <begin position="37"/>
        <end position="56"/>
    </location>
</feature>
<evidence type="ECO:0000255" key="1">
    <source>
        <dbReference type="PROSITE-ProRule" id="PRU00335"/>
    </source>
</evidence>
<evidence type="ECO:0000269" key="2">
    <source>
    </source>
</evidence>
<sequence>MQTRKTGVRAQQADRTRDNILKAAVKVFSKEGFTGGRIEQISTLAKSNDRMIYYYFGSKEKLFISVLEHIYASFNQAEAKLRLDLADPEQALRELVAFIWDYYVRHPEFVTILATENLHQGLHARKSQNLRALSGEAVGVLRPIIEAGQAKGLFRDDICITHAYLMIASLCYFYNSNRHTLSSFLAVDLADKQAKADWLTFISDLALRGLRR</sequence>
<dbReference type="EMBL" id="AE015451">
    <property type="protein sequence ID" value="AAN69543.1"/>
    <property type="molecule type" value="Genomic_DNA"/>
</dbReference>
<dbReference type="RefSeq" id="NP_746079.1">
    <property type="nucleotide sequence ID" value="NC_002947.4"/>
</dbReference>
<dbReference type="RefSeq" id="WP_010954766.1">
    <property type="nucleotide sequence ID" value="NZ_CP169744.1"/>
</dbReference>
<dbReference type="SMR" id="Q88FX7"/>
<dbReference type="STRING" id="160488.PP_3949"/>
<dbReference type="PaxDb" id="160488-PP_3949"/>
<dbReference type="KEGG" id="ppu:PP_3949"/>
<dbReference type="PATRIC" id="fig|160488.4.peg.4205"/>
<dbReference type="eggNOG" id="COG1309">
    <property type="taxonomic scope" value="Bacteria"/>
</dbReference>
<dbReference type="HOGENOM" id="CLU_069356_1_2_6"/>
<dbReference type="OrthoDB" id="2356263at2"/>
<dbReference type="PhylomeDB" id="Q88FX7"/>
<dbReference type="BioCyc" id="PPUT160488:G1G01-4214-MONOMER"/>
<dbReference type="UniPathway" id="UPA01010"/>
<dbReference type="Proteomes" id="UP000000556">
    <property type="component" value="Chromosome"/>
</dbReference>
<dbReference type="GO" id="GO:0003677">
    <property type="term" value="F:DNA binding"/>
    <property type="evidence" value="ECO:0007669"/>
    <property type="project" value="UniProtKB-KW"/>
</dbReference>
<dbReference type="GO" id="GO:0009056">
    <property type="term" value="P:catabolic process"/>
    <property type="evidence" value="ECO:0007669"/>
    <property type="project" value="UniProtKB-KW"/>
</dbReference>
<dbReference type="Gene3D" id="1.10.10.60">
    <property type="entry name" value="Homeodomain-like"/>
    <property type="match status" value="1"/>
</dbReference>
<dbReference type="Gene3D" id="1.10.357.10">
    <property type="entry name" value="Tetracycline Repressor, domain 2"/>
    <property type="match status" value="1"/>
</dbReference>
<dbReference type="InterPro" id="IPR009057">
    <property type="entry name" value="Homeodomain-like_sf"/>
</dbReference>
<dbReference type="InterPro" id="IPR050109">
    <property type="entry name" value="HTH-type_TetR-like_transc_reg"/>
</dbReference>
<dbReference type="InterPro" id="IPR001647">
    <property type="entry name" value="HTH_TetR"/>
</dbReference>
<dbReference type="InterPro" id="IPR041474">
    <property type="entry name" value="NicS_C"/>
</dbReference>
<dbReference type="InterPro" id="IPR036271">
    <property type="entry name" value="Tet_transcr_reg_TetR-rel_C_sf"/>
</dbReference>
<dbReference type="PANTHER" id="PTHR30328:SF54">
    <property type="entry name" value="HTH-TYPE TRANSCRIPTIONAL REPRESSOR SCO4008"/>
    <property type="match status" value="1"/>
</dbReference>
<dbReference type="PANTHER" id="PTHR30328">
    <property type="entry name" value="TRANSCRIPTIONAL REPRESSOR"/>
    <property type="match status" value="1"/>
</dbReference>
<dbReference type="Pfam" id="PF17938">
    <property type="entry name" value="TetR_C_29"/>
    <property type="match status" value="1"/>
</dbReference>
<dbReference type="Pfam" id="PF00440">
    <property type="entry name" value="TetR_N"/>
    <property type="match status" value="1"/>
</dbReference>
<dbReference type="PRINTS" id="PR00455">
    <property type="entry name" value="HTHTETR"/>
</dbReference>
<dbReference type="SUPFAM" id="SSF46689">
    <property type="entry name" value="Homeodomain-like"/>
    <property type="match status" value="1"/>
</dbReference>
<dbReference type="SUPFAM" id="SSF48498">
    <property type="entry name" value="Tetracyclin repressor-like, C-terminal domain"/>
    <property type="match status" value="1"/>
</dbReference>
<dbReference type="PROSITE" id="PS50977">
    <property type="entry name" value="HTH_TETR_2"/>
    <property type="match status" value="1"/>
</dbReference>
<accession>Q88FX7</accession>
<name>NICS_PSEPK</name>
<protein>
    <recommendedName>
        <fullName>HTH-type transcriptional repressor NicS</fullName>
    </recommendedName>
    <alternativeName>
        <fullName>Nicotinate degradation protein S</fullName>
    </alternativeName>
</protein>
<comment type="function">
    <text evidence="2">Transcriptional repressor for the nicAB operon, encoding the upper aerobic nicotinate degradation pathway. Acts under non-induced conditions: repression of the nicAB operon becomes alleviated in presence of either nicotinate or 6-hydroxynicotinate (6HNA).</text>
</comment>
<comment type="pathway">
    <text evidence="2">Cofactor degradation; nicotinate degradation [regulation].</text>
</comment>
<comment type="induction">
    <text evidence="2">Expressed at a basal level under non-inducing conditions, but expression increases when the cells are grown in nicotinate as sole carbon source.</text>
</comment>
<comment type="disruption phenotype">
    <text evidence="2">Growth in nicotinate or 6HNA is similar to that of the wild-type strain. Mutant strain shows constitutive levels of nicotinate hydroxylase activity, and these levels are similar to the induced levels detected in the wild-type strain grown in nicotinate. On the contrary, the NicX activity shows the same induction profile than that observed in the parental strain.</text>
</comment>
<reference key="1">
    <citation type="journal article" date="2002" name="Environ. Microbiol.">
        <title>Complete genome sequence and comparative analysis of the metabolically versatile Pseudomonas putida KT2440.</title>
        <authorList>
            <person name="Nelson K.E."/>
            <person name="Weinel C."/>
            <person name="Paulsen I.T."/>
            <person name="Dodson R.J."/>
            <person name="Hilbert H."/>
            <person name="Martins dos Santos V.A.P."/>
            <person name="Fouts D.E."/>
            <person name="Gill S.R."/>
            <person name="Pop M."/>
            <person name="Holmes M."/>
            <person name="Brinkac L.M."/>
            <person name="Beanan M.J."/>
            <person name="DeBoy R.T."/>
            <person name="Daugherty S.C."/>
            <person name="Kolonay J.F."/>
            <person name="Madupu R."/>
            <person name="Nelson W.C."/>
            <person name="White O."/>
            <person name="Peterson J.D."/>
            <person name="Khouri H.M."/>
            <person name="Hance I."/>
            <person name="Chris Lee P."/>
            <person name="Holtzapple E.K."/>
            <person name="Scanlan D."/>
            <person name="Tran K."/>
            <person name="Moazzez A."/>
            <person name="Utterback T.R."/>
            <person name="Rizzo M."/>
            <person name="Lee K."/>
            <person name="Kosack D."/>
            <person name="Moestl D."/>
            <person name="Wedler H."/>
            <person name="Lauber J."/>
            <person name="Stjepandic D."/>
            <person name="Hoheisel J."/>
            <person name="Straetz M."/>
            <person name="Heim S."/>
            <person name="Kiewitz C."/>
            <person name="Eisen J.A."/>
            <person name="Timmis K.N."/>
            <person name="Duesterhoeft A."/>
            <person name="Tuemmler B."/>
            <person name="Fraser C.M."/>
        </authorList>
    </citation>
    <scope>NUCLEOTIDE SEQUENCE [LARGE SCALE GENOMIC DNA]</scope>
    <source>
        <strain>ATCC 47054 / DSM 6125 / CFBP 8728 / NCIMB 11950 / KT2440</strain>
    </source>
</reference>
<reference key="2">
    <citation type="journal article" date="2011" name="Environ. Microbiol.">
        <title>A finely tuned regulatory circuit of the nicotinic acid degradation pathway in Pseudomonas putida.</title>
        <authorList>
            <person name="Jimenez J.I."/>
            <person name="Juarez J.F."/>
            <person name="Garcia J.L."/>
            <person name="Diaz E."/>
        </authorList>
    </citation>
    <scope>FUNCTION</scope>
    <scope>PATHWAY</scope>
    <scope>DISRUPTION PHENOTYPE</scope>
    <scope>INDUCTION</scope>
    <source>
        <strain>ATCC 47054 / DSM 6125 / CFBP 8728 / NCIMB 11950 / KT2440</strain>
    </source>
</reference>